<protein>
    <recommendedName>
        <fullName evidence="1">Tol-Pal system protein TolB</fullName>
    </recommendedName>
</protein>
<proteinExistence type="inferred from homology"/>
<feature type="signal peptide" evidence="1">
    <location>
        <begin position="1"/>
        <end position="21"/>
    </location>
</feature>
<feature type="chain" id="PRO_0000259070" description="Tol-Pal system protein TolB" evidence="1">
    <location>
        <begin position="22"/>
        <end position="433"/>
    </location>
</feature>
<name>TOLB_PSEF5</name>
<dbReference type="EMBL" id="CP000076">
    <property type="protein sequence ID" value="AAY93988.1"/>
    <property type="molecule type" value="Genomic_DNA"/>
</dbReference>
<dbReference type="SMR" id="Q4K7E4"/>
<dbReference type="STRING" id="220664.PFL_4758"/>
<dbReference type="KEGG" id="pfl:PFL_4758"/>
<dbReference type="PATRIC" id="fig|220664.5.peg.4868"/>
<dbReference type="eggNOG" id="COG0823">
    <property type="taxonomic scope" value="Bacteria"/>
</dbReference>
<dbReference type="HOGENOM" id="CLU_047123_0_0_6"/>
<dbReference type="Proteomes" id="UP000008540">
    <property type="component" value="Chromosome"/>
</dbReference>
<dbReference type="GO" id="GO:0042597">
    <property type="term" value="C:periplasmic space"/>
    <property type="evidence" value="ECO:0007669"/>
    <property type="project" value="UniProtKB-SubCell"/>
</dbReference>
<dbReference type="GO" id="GO:0051301">
    <property type="term" value="P:cell division"/>
    <property type="evidence" value="ECO:0007669"/>
    <property type="project" value="UniProtKB-UniRule"/>
</dbReference>
<dbReference type="GO" id="GO:0017038">
    <property type="term" value="P:protein import"/>
    <property type="evidence" value="ECO:0007669"/>
    <property type="project" value="InterPro"/>
</dbReference>
<dbReference type="Gene3D" id="2.120.10.30">
    <property type="entry name" value="TolB, C-terminal domain"/>
    <property type="match status" value="1"/>
</dbReference>
<dbReference type="Gene3D" id="3.40.50.10070">
    <property type="entry name" value="TolB, N-terminal domain"/>
    <property type="match status" value="1"/>
</dbReference>
<dbReference type="HAMAP" id="MF_00671">
    <property type="entry name" value="TolB"/>
    <property type="match status" value="1"/>
</dbReference>
<dbReference type="InterPro" id="IPR011042">
    <property type="entry name" value="6-blade_b-propeller_TolB-like"/>
</dbReference>
<dbReference type="InterPro" id="IPR011659">
    <property type="entry name" value="PD40"/>
</dbReference>
<dbReference type="InterPro" id="IPR014167">
    <property type="entry name" value="Tol-Pal_TolB"/>
</dbReference>
<dbReference type="InterPro" id="IPR007195">
    <property type="entry name" value="TolB_N"/>
</dbReference>
<dbReference type="NCBIfam" id="TIGR02800">
    <property type="entry name" value="propeller_TolB"/>
    <property type="match status" value="1"/>
</dbReference>
<dbReference type="PANTHER" id="PTHR36842:SF1">
    <property type="entry name" value="PROTEIN TOLB"/>
    <property type="match status" value="1"/>
</dbReference>
<dbReference type="PANTHER" id="PTHR36842">
    <property type="entry name" value="PROTEIN TOLB HOMOLOG"/>
    <property type="match status" value="1"/>
</dbReference>
<dbReference type="Pfam" id="PF07676">
    <property type="entry name" value="PD40"/>
    <property type="match status" value="3"/>
</dbReference>
<dbReference type="Pfam" id="PF04052">
    <property type="entry name" value="TolB_N"/>
    <property type="match status" value="1"/>
</dbReference>
<dbReference type="SUPFAM" id="SSF52964">
    <property type="entry name" value="TolB, N-terminal domain"/>
    <property type="match status" value="1"/>
</dbReference>
<dbReference type="SUPFAM" id="SSF69304">
    <property type="entry name" value="Tricorn protease N-terminal domain"/>
    <property type="match status" value="1"/>
</dbReference>
<gene>
    <name evidence="1" type="primary">tolB</name>
    <name type="ordered locus">PFL_4758</name>
</gene>
<sequence length="433" mass="47532">MRNLLRGMLVVICCMAGIAAADEKNILVTSGSDRATPIAVVPFGWQGGSVLPDDMAQIIGDDLRNSGYYAPIPKQNMISLPTQASEVIFRDWKALGAQYVMVGSIVPAGGRLQVQYALFNVATEQQVLTGSVSGSVDQLRDMSHYISDQSFEKLTGIKGAFSTRLLYVTAERFSVNNTRYTLQRSDYDGARAVTLLQSREPILSPRFAPDGKRIAYVSFEQKRPRIFVQHIDTGRREQITNFEGLNGAPAWSPDGTRLAFVLSKDGNPDIYVMNMASRQISRVTSGPGINTEPFWGKDGSTIYFTSDRGGKPQVYKSNINGGGAERVTFIGNYNANPKLSADEKTLVMIHRQDGFTNFRVAAQDLQRGSVKILTDTNLDESATVAPNGTMVIYATRQQGRGVLMLVSINGRVRLPLPTAQGEVREPSWSPYLN</sequence>
<accession>Q4K7E4</accession>
<keyword id="KW-0131">Cell cycle</keyword>
<keyword id="KW-0132">Cell division</keyword>
<keyword id="KW-0574">Periplasm</keyword>
<keyword id="KW-0732">Signal</keyword>
<comment type="function">
    <text evidence="1">Part of the Tol-Pal system, which plays a role in outer membrane invagination during cell division and is important for maintaining outer membrane integrity.</text>
</comment>
<comment type="subunit">
    <text evidence="1">The Tol-Pal system is composed of five core proteins: the inner membrane proteins TolA, TolQ and TolR, the periplasmic protein TolB and the outer membrane protein Pal. They form a network linking the inner and outer membranes and the peptidoglycan layer.</text>
</comment>
<comment type="subcellular location">
    <subcellularLocation>
        <location evidence="1">Periplasm</location>
    </subcellularLocation>
</comment>
<comment type="similarity">
    <text evidence="1">Belongs to the TolB family.</text>
</comment>
<organism>
    <name type="scientific">Pseudomonas fluorescens (strain ATCC BAA-477 / NRRL B-23932 / Pf-5)</name>
    <dbReference type="NCBI Taxonomy" id="220664"/>
    <lineage>
        <taxon>Bacteria</taxon>
        <taxon>Pseudomonadati</taxon>
        <taxon>Pseudomonadota</taxon>
        <taxon>Gammaproteobacteria</taxon>
        <taxon>Pseudomonadales</taxon>
        <taxon>Pseudomonadaceae</taxon>
        <taxon>Pseudomonas</taxon>
    </lineage>
</organism>
<evidence type="ECO:0000255" key="1">
    <source>
        <dbReference type="HAMAP-Rule" id="MF_00671"/>
    </source>
</evidence>
<reference key="1">
    <citation type="journal article" date="2005" name="Nat. Biotechnol.">
        <title>Complete genome sequence of the plant commensal Pseudomonas fluorescens Pf-5.</title>
        <authorList>
            <person name="Paulsen I.T."/>
            <person name="Press C.M."/>
            <person name="Ravel J."/>
            <person name="Kobayashi D.Y."/>
            <person name="Myers G.S.A."/>
            <person name="Mavrodi D.V."/>
            <person name="DeBoy R.T."/>
            <person name="Seshadri R."/>
            <person name="Ren Q."/>
            <person name="Madupu R."/>
            <person name="Dodson R.J."/>
            <person name="Durkin A.S."/>
            <person name="Brinkac L.M."/>
            <person name="Daugherty S.C."/>
            <person name="Sullivan S.A."/>
            <person name="Rosovitz M.J."/>
            <person name="Gwinn M.L."/>
            <person name="Zhou L."/>
            <person name="Schneider D.J."/>
            <person name="Cartinhour S.W."/>
            <person name="Nelson W.C."/>
            <person name="Weidman J."/>
            <person name="Watkins K."/>
            <person name="Tran K."/>
            <person name="Khouri H."/>
            <person name="Pierson E.A."/>
            <person name="Pierson L.S. III"/>
            <person name="Thomashow L.S."/>
            <person name="Loper J.E."/>
        </authorList>
    </citation>
    <scope>NUCLEOTIDE SEQUENCE [LARGE SCALE GENOMIC DNA]</scope>
    <source>
        <strain>ATCC BAA-477 / NRRL B-23932 / Pf-5</strain>
    </source>
</reference>